<name>AZOR_ENTFA</name>
<evidence type="ECO:0000255" key="1">
    <source>
        <dbReference type="HAMAP-Rule" id="MF_01216"/>
    </source>
</evidence>
<evidence type="ECO:0000269" key="2">
    <source>
    </source>
</evidence>
<evidence type="ECO:0000269" key="3">
    <source ref="3"/>
</evidence>
<evidence type="ECO:0000303" key="4">
    <source>
    </source>
</evidence>
<evidence type="ECO:0000305" key="5"/>
<evidence type="ECO:0007744" key="6">
    <source>
        <dbReference type="PDB" id="2HPV"/>
    </source>
</evidence>
<evidence type="ECO:0007829" key="7">
    <source>
        <dbReference type="PDB" id="2HPV"/>
    </source>
</evidence>
<keyword id="KW-0002">3D-structure</keyword>
<keyword id="KW-0903">Direct protein sequencing</keyword>
<keyword id="KW-0285">Flavoprotein</keyword>
<keyword id="KW-0288">FMN</keyword>
<keyword id="KW-0520">NAD</keyword>
<keyword id="KW-0560">Oxidoreductase</keyword>
<keyword id="KW-1185">Reference proteome</keyword>
<sequence>MSKLLVVKAHPLTKEESRSVRALETFLASYRETNPSDEIEILDVYAPETNMPEIDEELLSAWGALRAGAAFETLSENQQQKVARFNELTDQFLSADKVVIANPMWNLNVPTRLKAWVDTINVAGKTFQYTAEGPKPLTSGKKALHIQSNGGFYEGKDFASQYIKAILNFIGVDQVDGLFIEGIDHFPDRAEELLNTAMTKATEYGKTF</sequence>
<organism>
    <name type="scientific">Enterococcus faecalis (strain ATCC 700802 / V583)</name>
    <dbReference type="NCBI Taxonomy" id="226185"/>
    <lineage>
        <taxon>Bacteria</taxon>
        <taxon>Bacillati</taxon>
        <taxon>Bacillota</taxon>
        <taxon>Bacilli</taxon>
        <taxon>Lactobacillales</taxon>
        <taxon>Enterococcaceae</taxon>
        <taxon>Enterococcus</taxon>
    </lineage>
</organism>
<reference key="1">
    <citation type="journal article" date="2004" name="Protein Expr. Purif.">
        <title>Molecular cloning, overexpression, purification, and characterization of an aerobic FMN-dependent azoreductase from Enterococcus faecalis.</title>
        <authorList>
            <person name="Chen H."/>
            <person name="Wang R.-F."/>
            <person name="Cerniglia C.E."/>
        </authorList>
    </citation>
    <scope>NUCLEOTIDE SEQUENCE [GENOMIC DNA]</scope>
    <scope>PROTEIN SEQUENCE OF 1-11</scope>
    <scope>FUNCTION</scope>
    <scope>CATALYTIC ACTIVITY</scope>
    <scope>BIOPHYSICOCHEMICAL PROPERTIES</scope>
    <scope>SUBUNIT</scope>
    <scope>COFACTOR</scope>
    <scope>CHARACTERIZATION</scope>
    <source>
        <strain>ATCC 19433 / DSM 20478 / JCM 8726 / NBRC 100481 / NCIMB 775</strain>
    </source>
</reference>
<reference key="2">
    <citation type="journal article" date="2003" name="Science">
        <title>Role of mobile DNA in the evolution of vancomycin-resistant Enterococcus faecalis.</title>
        <authorList>
            <person name="Paulsen I.T."/>
            <person name="Banerjei L."/>
            <person name="Myers G.S.A."/>
            <person name="Nelson K.E."/>
            <person name="Seshadri R."/>
            <person name="Read T.D."/>
            <person name="Fouts D.E."/>
            <person name="Eisen J.A."/>
            <person name="Gill S.R."/>
            <person name="Heidelberg J.F."/>
            <person name="Tettelin H."/>
            <person name="Dodson R.J."/>
            <person name="Umayam L.A."/>
            <person name="Brinkac L.M."/>
            <person name="Beanan M.J."/>
            <person name="Daugherty S.C."/>
            <person name="DeBoy R.T."/>
            <person name="Durkin S.A."/>
            <person name="Kolonay J.F."/>
            <person name="Madupu R."/>
            <person name="Nelson W.C."/>
            <person name="Vamathevan J.J."/>
            <person name="Tran B."/>
            <person name="Upton J."/>
            <person name="Hansen T."/>
            <person name="Shetty J."/>
            <person name="Khouri H.M."/>
            <person name="Utterback T.R."/>
            <person name="Radune D."/>
            <person name="Ketchum K.A."/>
            <person name="Dougherty B.A."/>
            <person name="Fraser C.M."/>
        </authorList>
    </citation>
    <scope>NUCLEOTIDE SEQUENCE [LARGE SCALE GENOMIC DNA]</scope>
    <source>
        <strain>ATCC 700802 / V583</strain>
    </source>
</reference>
<reference evidence="6" key="3">
    <citation type="submission" date="2006-07" db="PDB data bank">
        <title>Crystal structure of FMN-dependent azoreductase from Enterococcus faecalis at 2.00 A resolution.</title>
        <authorList>
            <person name="Liu Z.J."/>
            <person name="Chen H."/>
            <person name="Chen L."/>
            <person name="Shah N."/>
            <person name="Rose J.P."/>
            <person name="Wang B.C."/>
        </authorList>
    </citation>
    <scope>X-RAY CRYSTALLOGRAPHY (2.00 ANGSTROMS) IN COMPLEX WITH FMN</scope>
</reference>
<comment type="function">
    <text evidence="1">Quinone reductase that provides resistance to thiol-specific stress caused by electrophilic quinones.</text>
</comment>
<comment type="function">
    <text evidence="2">Also exhibits azoreductase activity. Catalyzes the reductive cleavage of the azo bond in aromatic azo compounds to the corresponding amines. Requires NADH, but not NADPH, as an electron donor for its activity. The enzyme can also reduce a wide range of sulfonated azo dyes. The substrate preference order is methyl Red &gt; Orange II &gt; Ponceau BS &gt; Ponceau S &gt; Orange G &gt; Amaranth.</text>
</comment>
<comment type="catalytic activity">
    <reaction evidence="1">
        <text>2 a quinone + NADH + H(+) = 2 a 1,4-benzosemiquinone + NAD(+)</text>
        <dbReference type="Rhea" id="RHEA:65952"/>
        <dbReference type="ChEBI" id="CHEBI:15378"/>
        <dbReference type="ChEBI" id="CHEBI:57540"/>
        <dbReference type="ChEBI" id="CHEBI:57945"/>
        <dbReference type="ChEBI" id="CHEBI:132124"/>
        <dbReference type="ChEBI" id="CHEBI:134225"/>
    </reaction>
</comment>
<comment type="catalytic activity">
    <reaction evidence="1 2">
        <text>N,N-dimethyl-1,4-phenylenediamine + anthranilate + 2 NAD(+) = 2-(4-dimethylaminophenyl)diazenylbenzoate + 2 NADH + 2 H(+)</text>
        <dbReference type="Rhea" id="RHEA:55872"/>
        <dbReference type="ChEBI" id="CHEBI:15378"/>
        <dbReference type="ChEBI" id="CHEBI:15783"/>
        <dbReference type="ChEBI" id="CHEBI:16567"/>
        <dbReference type="ChEBI" id="CHEBI:57540"/>
        <dbReference type="ChEBI" id="CHEBI:57945"/>
        <dbReference type="ChEBI" id="CHEBI:71579"/>
        <dbReference type="EC" id="1.7.1.17"/>
    </reaction>
    <physiologicalReaction direction="right-to-left" evidence="2">
        <dbReference type="Rhea" id="RHEA:55874"/>
    </physiologicalReaction>
</comment>
<comment type="cofactor">
    <cofactor evidence="1 2">
        <name>FMN</name>
        <dbReference type="ChEBI" id="CHEBI:58210"/>
    </cofactor>
    <text evidence="1">Binds 1 FMN per subunit.</text>
</comment>
<comment type="biophysicochemical properties">
    <kinetics>
        <KM evidence="2">24 uM for methyl red</KM>
        <KM evidence="2">140 uM for NADH</KM>
        <Vmax evidence="2">89.2 umol/min/mg enzyme toward methyl red</Vmax>
        <Vmax evidence="2">86.2 umol/min/mg enzyme toward NADH</Vmax>
    </kinetics>
</comment>
<comment type="subunit">
    <text evidence="1 2">Homodimer.</text>
</comment>
<comment type="similarity">
    <text evidence="1 5">Belongs to the azoreductase type 1 family.</text>
</comment>
<protein>
    <recommendedName>
        <fullName evidence="1">FMN-dependent NADH:quinone oxidoreductase</fullName>
        <ecNumber evidence="1">1.6.5.-</ecNumber>
    </recommendedName>
    <alternativeName>
        <fullName evidence="1">Azo-dye reductase</fullName>
    </alternativeName>
    <alternativeName>
        <fullName evidence="1">FMN-dependent NADH-azo compound oxidoreductase</fullName>
    </alternativeName>
    <alternativeName>
        <fullName evidence="1 5">FMN-dependent NADH-azoreductase</fullName>
        <ecNumber evidence="1 2">1.7.1.17</ecNumber>
    </alternativeName>
</protein>
<accession>Q831B2</accession>
<accession>Q6TFZ9</accession>
<dbReference type="EC" id="1.6.5.-" evidence="1"/>
<dbReference type="EC" id="1.7.1.17" evidence="1 2"/>
<dbReference type="EMBL" id="AY422207">
    <property type="protein sequence ID" value="AAR38851.1"/>
    <property type="molecule type" value="Genomic_DNA"/>
</dbReference>
<dbReference type="EMBL" id="AE016830">
    <property type="protein sequence ID" value="AAO82310.1"/>
    <property type="molecule type" value="Genomic_DNA"/>
</dbReference>
<dbReference type="RefSeq" id="NP_816240.1">
    <property type="nucleotide sequence ID" value="NC_004668.1"/>
</dbReference>
<dbReference type="RefSeq" id="WP_002367152.1">
    <property type="nucleotide sequence ID" value="NZ_KE136528.1"/>
</dbReference>
<dbReference type="PDB" id="2HPV">
    <property type="method" value="X-ray"/>
    <property type="resolution" value="2.00 A"/>
    <property type="chains" value="A/B/C/D=1-208"/>
</dbReference>
<dbReference type="PDBsum" id="2HPV"/>
<dbReference type="SMR" id="Q831B2"/>
<dbReference type="STRING" id="226185.EF_2601"/>
<dbReference type="EnsemblBacteria" id="AAO82310">
    <property type="protein sequence ID" value="AAO82310"/>
    <property type="gene ID" value="EF_2601"/>
</dbReference>
<dbReference type="KEGG" id="efa:EF2601"/>
<dbReference type="PATRIC" id="fig|226185.45.peg.955"/>
<dbReference type="eggNOG" id="COG1182">
    <property type="taxonomic scope" value="Bacteria"/>
</dbReference>
<dbReference type="HOGENOM" id="CLU_088964_3_0_9"/>
<dbReference type="BRENDA" id="1.7.1.17">
    <property type="organism ID" value="2095"/>
</dbReference>
<dbReference type="BRENDA" id="1.7.1.6">
    <property type="organism ID" value="2095"/>
</dbReference>
<dbReference type="SABIO-RK" id="Q831B2"/>
<dbReference type="EvolutionaryTrace" id="Q831B2"/>
<dbReference type="Proteomes" id="UP000001415">
    <property type="component" value="Chromosome"/>
</dbReference>
<dbReference type="GO" id="GO:0009055">
    <property type="term" value="F:electron transfer activity"/>
    <property type="evidence" value="ECO:0007669"/>
    <property type="project" value="UniProtKB-UniRule"/>
</dbReference>
<dbReference type="GO" id="GO:0010181">
    <property type="term" value="F:FMN binding"/>
    <property type="evidence" value="ECO:0007669"/>
    <property type="project" value="UniProtKB-UniRule"/>
</dbReference>
<dbReference type="GO" id="GO:0016652">
    <property type="term" value="F:oxidoreductase activity, acting on NAD(P)H as acceptor"/>
    <property type="evidence" value="ECO:0007669"/>
    <property type="project" value="UniProtKB-UniRule"/>
</dbReference>
<dbReference type="GO" id="GO:0016655">
    <property type="term" value="F:oxidoreductase activity, acting on NAD(P)H, quinone or similar compound as acceptor"/>
    <property type="evidence" value="ECO:0007669"/>
    <property type="project" value="InterPro"/>
</dbReference>
<dbReference type="Gene3D" id="3.40.50.360">
    <property type="match status" value="1"/>
</dbReference>
<dbReference type="HAMAP" id="MF_01216">
    <property type="entry name" value="Azoreductase_type1"/>
    <property type="match status" value="1"/>
</dbReference>
<dbReference type="InterPro" id="IPR003680">
    <property type="entry name" value="Flavodoxin_fold"/>
</dbReference>
<dbReference type="InterPro" id="IPR029039">
    <property type="entry name" value="Flavoprotein-like_sf"/>
</dbReference>
<dbReference type="InterPro" id="IPR050104">
    <property type="entry name" value="FMN-dep_NADH:Q_OxRdtase_AzoR1"/>
</dbReference>
<dbReference type="InterPro" id="IPR023048">
    <property type="entry name" value="NADH:quinone_OxRdtase_FMN_depd"/>
</dbReference>
<dbReference type="PANTHER" id="PTHR43741">
    <property type="entry name" value="FMN-DEPENDENT NADH-AZOREDUCTASE 1"/>
    <property type="match status" value="1"/>
</dbReference>
<dbReference type="PANTHER" id="PTHR43741:SF7">
    <property type="entry name" value="FMN-DEPENDENT NADH:QUINONE OXIDOREDUCTASE"/>
    <property type="match status" value="1"/>
</dbReference>
<dbReference type="Pfam" id="PF02525">
    <property type="entry name" value="Flavodoxin_2"/>
    <property type="match status" value="1"/>
</dbReference>
<dbReference type="SUPFAM" id="SSF52218">
    <property type="entry name" value="Flavoproteins"/>
    <property type="match status" value="1"/>
</dbReference>
<gene>
    <name evidence="1" type="primary">azoR</name>
    <name evidence="4" type="synonym">azoA</name>
    <name type="ordered locus">EF_2601</name>
</gene>
<feature type="chain" id="PRO_0000233263" description="FMN-dependent NADH:quinone oxidoreductase">
    <location>
        <begin position="1"/>
        <end position="208"/>
    </location>
</feature>
<feature type="binding site" evidence="3 6">
    <location>
        <position position="10"/>
    </location>
    <ligand>
        <name>FMN</name>
        <dbReference type="ChEBI" id="CHEBI:58210"/>
    </ligand>
</feature>
<feature type="binding site" evidence="1 3 6">
    <location>
        <begin position="17"/>
        <end position="19"/>
    </location>
    <ligand>
        <name>FMN</name>
        <dbReference type="ChEBI" id="CHEBI:58210"/>
    </ligand>
</feature>
<feature type="binding site" evidence="1 3 6">
    <location>
        <begin position="104"/>
        <end position="107"/>
    </location>
    <ligand>
        <name>FMN</name>
        <dbReference type="ChEBI" id="CHEBI:58210"/>
    </ligand>
</feature>
<feature type="binding site" evidence="3 6">
    <location>
        <begin position="148"/>
        <end position="153"/>
    </location>
    <ligand>
        <name>FMN</name>
        <dbReference type="ChEBI" id="CHEBI:58210"/>
    </ligand>
</feature>
<feature type="binding site" evidence="3 6">
    <location>
        <position position="184"/>
    </location>
    <ligand>
        <name>FMN</name>
        <dbReference type="ChEBI" id="CHEBI:58210"/>
    </ligand>
</feature>
<feature type="strand" evidence="7">
    <location>
        <begin position="3"/>
        <end position="8"/>
    </location>
</feature>
<feature type="turn" evidence="7">
    <location>
        <begin position="14"/>
        <end position="16"/>
    </location>
</feature>
<feature type="helix" evidence="7">
    <location>
        <begin position="18"/>
        <end position="33"/>
    </location>
</feature>
<feature type="strand" evidence="7">
    <location>
        <begin position="37"/>
        <end position="43"/>
    </location>
</feature>
<feature type="helix" evidence="7">
    <location>
        <begin position="47"/>
        <end position="49"/>
    </location>
</feature>
<feature type="helix" evidence="7">
    <location>
        <begin position="56"/>
        <end position="67"/>
    </location>
</feature>
<feature type="helix" evidence="7">
    <location>
        <begin position="71"/>
        <end position="73"/>
    </location>
</feature>
<feature type="helix" evidence="7">
    <location>
        <begin position="76"/>
        <end position="94"/>
    </location>
</feature>
<feature type="strand" evidence="7">
    <location>
        <begin position="96"/>
        <end position="103"/>
    </location>
</feature>
<feature type="helix" evidence="7">
    <location>
        <begin position="111"/>
        <end position="120"/>
    </location>
</feature>
<feature type="turn" evidence="7">
    <location>
        <begin position="123"/>
        <end position="125"/>
    </location>
</feature>
<feature type="strand" evidence="7">
    <location>
        <begin position="126"/>
        <end position="130"/>
    </location>
</feature>
<feature type="strand" evidence="7">
    <location>
        <begin position="133"/>
        <end position="137"/>
    </location>
</feature>
<feature type="strand" evidence="7">
    <location>
        <begin position="142"/>
        <end position="151"/>
    </location>
</feature>
<feature type="helix" evidence="7">
    <location>
        <begin position="158"/>
        <end position="169"/>
    </location>
</feature>
<feature type="strand" evidence="7">
    <location>
        <begin position="174"/>
        <end position="181"/>
    </location>
</feature>
<feature type="turn" evidence="7">
    <location>
        <begin position="183"/>
        <end position="185"/>
    </location>
</feature>
<feature type="helix" evidence="7">
    <location>
        <begin position="187"/>
        <end position="189"/>
    </location>
</feature>
<feature type="helix" evidence="7">
    <location>
        <begin position="190"/>
        <end position="207"/>
    </location>
</feature>
<proteinExistence type="evidence at protein level"/>